<comment type="function">
    <text>Abolishes the inhibitory effect of tetracyclin on protein synthesis by a non-covalent modification of the ribosomes.</text>
</comment>
<comment type="similarity">
    <text evidence="2">Belongs to the TRAFAC class translation factor GTPase superfamily. Classic translation factor GTPase family. TetM/TetO subfamily.</text>
</comment>
<organism>
    <name type="scientific">Streptococcus pneumoniae</name>
    <dbReference type="NCBI Taxonomy" id="1313"/>
    <lineage>
        <taxon>Bacteria</taxon>
        <taxon>Bacillati</taxon>
        <taxon>Bacillota</taxon>
        <taxon>Bacilli</taxon>
        <taxon>Lactobacillales</taxon>
        <taxon>Streptococcaceae</taxon>
        <taxon>Streptococcus</taxon>
    </lineage>
</organism>
<gene>
    <name type="primary">tetM(5251)</name>
</gene>
<proteinExistence type="inferred from homology"/>
<keyword id="KW-0046">Antibiotic resistance</keyword>
<keyword id="KW-0342">GTP-binding</keyword>
<keyword id="KW-0547">Nucleotide-binding</keyword>
<keyword id="KW-0648">Protein biosynthesis</keyword>
<keyword id="KW-0814">Transposable element</keyword>
<accession>Q54807</accession>
<name>TETM_STREE</name>
<protein>
    <recommendedName>
        <fullName>Tetracycline resistance protein TetM from transposon Tn5251</fullName>
        <shortName>Tet(M)</shortName>
    </recommendedName>
</protein>
<evidence type="ECO:0000250" key="1"/>
<evidence type="ECO:0000255" key="2">
    <source>
        <dbReference type="PROSITE-ProRule" id="PRU01059"/>
    </source>
</evidence>
<reference key="1">
    <citation type="journal article" date="1996" name="FEMS Microbiol. Lett.">
        <title>Characterization of conjugative transposon Tn5251 of Streptococcus pneumoniae.</title>
        <authorList>
            <person name="Provvedi R."/>
            <person name="Manganelli R."/>
            <person name="Pozzi G."/>
        </authorList>
    </citation>
    <scope>NUCLEOTIDE SEQUENCE [GENOMIC DNA]</scope>
    <source>
        <strain>DP 1322</strain>
    </source>
</reference>
<feature type="chain" id="PRO_0000091502" description="Tetracycline resistance protein TetM from transposon Tn5251">
    <location>
        <begin position="1"/>
        <end position="639"/>
    </location>
</feature>
<feature type="domain" description="tr-type G" evidence="2">
    <location>
        <begin position="1"/>
        <end position="242"/>
    </location>
</feature>
<feature type="binding site" evidence="1">
    <location>
        <begin position="10"/>
        <end position="17"/>
    </location>
    <ligand>
        <name>GTP</name>
        <dbReference type="ChEBI" id="CHEBI:37565"/>
    </ligand>
</feature>
<feature type="binding site" evidence="1">
    <location>
        <begin position="74"/>
        <end position="78"/>
    </location>
    <ligand>
        <name>GTP</name>
        <dbReference type="ChEBI" id="CHEBI:37565"/>
    </ligand>
</feature>
<feature type="binding site" evidence="1">
    <location>
        <begin position="128"/>
        <end position="131"/>
    </location>
    <ligand>
        <name>GTP</name>
        <dbReference type="ChEBI" id="CHEBI:37565"/>
    </ligand>
</feature>
<dbReference type="EMBL" id="X90939">
    <property type="protein sequence ID" value="CAA62436.1"/>
    <property type="molecule type" value="Genomic_DNA"/>
</dbReference>
<dbReference type="SMR" id="Q54807"/>
<dbReference type="GO" id="GO:0005525">
    <property type="term" value="F:GTP binding"/>
    <property type="evidence" value="ECO:0007669"/>
    <property type="project" value="UniProtKB-KW"/>
</dbReference>
<dbReference type="GO" id="GO:0003924">
    <property type="term" value="F:GTPase activity"/>
    <property type="evidence" value="ECO:0007669"/>
    <property type="project" value="InterPro"/>
</dbReference>
<dbReference type="GO" id="GO:0046677">
    <property type="term" value="P:response to antibiotic"/>
    <property type="evidence" value="ECO:0007669"/>
    <property type="project" value="UniProtKB-KW"/>
</dbReference>
<dbReference type="GO" id="GO:0032790">
    <property type="term" value="P:ribosome disassembly"/>
    <property type="evidence" value="ECO:0007669"/>
    <property type="project" value="TreeGrafter"/>
</dbReference>
<dbReference type="GO" id="GO:0006412">
    <property type="term" value="P:translation"/>
    <property type="evidence" value="ECO:0007669"/>
    <property type="project" value="UniProtKB-KW"/>
</dbReference>
<dbReference type="CDD" id="cd03711">
    <property type="entry name" value="Tet_C"/>
    <property type="match status" value="1"/>
</dbReference>
<dbReference type="CDD" id="cd03690">
    <property type="entry name" value="Tet_II"/>
    <property type="match status" value="1"/>
</dbReference>
<dbReference type="CDD" id="cd16258">
    <property type="entry name" value="Tet_III"/>
    <property type="match status" value="1"/>
</dbReference>
<dbReference type="CDD" id="cd01684">
    <property type="entry name" value="Tet_like_IV"/>
    <property type="match status" value="1"/>
</dbReference>
<dbReference type="CDD" id="cd04168">
    <property type="entry name" value="TetM_like"/>
    <property type="match status" value="1"/>
</dbReference>
<dbReference type="Gene3D" id="3.30.230.10">
    <property type="match status" value="1"/>
</dbReference>
<dbReference type="Gene3D" id="3.30.70.240">
    <property type="match status" value="1"/>
</dbReference>
<dbReference type="Gene3D" id="3.30.70.870">
    <property type="entry name" value="Elongation Factor G (Translational Gtpase), domain 3"/>
    <property type="match status" value="1"/>
</dbReference>
<dbReference type="Gene3D" id="3.40.50.300">
    <property type="entry name" value="P-loop containing nucleotide triphosphate hydrolases"/>
    <property type="match status" value="1"/>
</dbReference>
<dbReference type="Gene3D" id="2.40.30.10">
    <property type="entry name" value="Translation factors"/>
    <property type="match status" value="1"/>
</dbReference>
<dbReference type="InterPro" id="IPR053905">
    <property type="entry name" value="EF-G-like_DII"/>
</dbReference>
<dbReference type="InterPro" id="IPR041095">
    <property type="entry name" value="EFG_II"/>
</dbReference>
<dbReference type="InterPro" id="IPR035647">
    <property type="entry name" value="EFG_III/V"/>
</dbReference>
<dbReference type="InterPro" id="IPR000640">
    <property type="entry name" value="EFG_V-like"/>
</dbReference>
<dbReference type="InterPro" id="IPR031157">
    <property type="entry name" value="G_TR_CS"/>
</dbReference>
<dbReference type="InterPro" id="IPR027417">
    <property type="entry name" value="P-loop_NTPase"/>
</dbReference>
<dbReference type="InterPro" id="IPR020568">
    <property type="entry name" value="Ribosomal_Su5_D2-typ_SF"/>
</dbReference>
<dbReference type="InterPro" id="IPR014721">
    <property type="entry name" value="Ribsml_uS5_D2-typ_fold_subgr"/>
</dbReference>
<dbReference type="InterPro" id="IPR005225">
    <property type="entry name" value="Small_GTP-bd"/>
</dbReference>
<dbReference type="InterPro" id="IPR000795">
    <property type="entry name" value="T_Tr_GTP-bd_dom"/>
</dbReference>
<dbReference type="InterPro" id="IPR035650">
    <property type="entry name" value="Tet_C"/>
</dbReference>
<dbReference type="InterPro" id="IPR009000">
    <property type="entry name" value="Transl_B-barrel_sf"/>
</dbReference>
<dbReference type="InterPro" id="IPR005517">
    <property type="entry name" value="Transl_elong_EFG/EF2_IV"/>
</dbReference>
<dbReference type="NCBIfam" id="TIGR00231">
    <property type="entry name" value="small_GTP"/>
    <property type="match status" value="1"/>
</dbReference>
<dbReference type="NCBIfam" id="NF012153">
    <property type="entry name" value="tet_protect"/>
    <property type="match status" value="1"/>
</dbReference>
<dbReference type="NCBIfam" id="NF012155">
    <property type="entry name" value="tet_protect_M"/>
    <property type="match status" value="1"/>
</dbReference>
<dbReference type="NCBIfam" id="NF033148">
    <property type="entry name" value="tet_protect_M_W"/>
    <property type="match status" value="1"/>
</dbReference>
<dbReference type="PANTHER" id="PTHR43261:SF1">
    <property type="entry name" value="RIBOSOME-RELEASING FACTOR 2, MITOCHONDRIAL"/>
    <property type="match status" value="1"/>
</dbReference>
<dbReference type="PANTHER" id="PTHR43261">
    <property type="entry name" value="TRANSLATION ELONGATION FACTOR G-RELATED"/>
    <property type="match status" value="1"/>
</dbReference>
<dbReference type="Pfam" id="PF22042">
    <property type="entry name" value="EF-G_D2"/>
    <property type="match status" value="1"/>
</dbReference>
<dbReference type="Pfam" id="PF00679">
    <property type="entry name" value="EFG_C"/>
    <property type="match status" value="1"/>
</dbReference>
<dbReference type="Pfam" id="PF14492">
    <property type="entry name" value="EFG_III"/>
    <property type="match status" value="1"/>
</dbReference>
<dbReference type="Pfam" id="PF03764">
    <property type="entry name" value="EFG_IV"/>
    <property type="match status" value="1"/>
</dbReference>
<dbReference type="Pfam" id="PF00009">
    <property type="entry name" value="GTP_EFTU"/>
    <property type="match status" value="1"/>
</dbReference>
<dbReference type="PRINTS" id="PR00315">
    <property type="entry name" value="ELONGATNFCT"/>
</dbReference>
<dbReference type="PRINTS" id="PR01037">
    <property type="entry name" value="TCRTETOQM"/>
</dbReference>
<dbReference type="SMART" id="SM00889">
    <property type="entry name" value="EFG_IV"/>
    <property type="match status" value="1"/>
</dbReference>
<dbReference type="SUPFAM" id="SSF54980">
    <property type="entry name" value="EF-G C-terminal domain-like"/>
    <property type="match status" value="2"/>
</dbReference>
<dbReference type="SUPFAM" id="SSF52540">
    <property type="entry name" value="P-loop containing nucleoside triphosphate hydrolases"/>
    <property type="match status" value="1"/>
</dbReference>
<dbReference type="SUPFAM" id="SSF54211">
    <property type="entry name" value="Ribosomal protein S5 domain 2-like"/>
    <property type="match status" value="1"/>
</dbReference>
<dbReference type="SUPFAM" id="SSF50447">
    <property type="entry name" value="Translation proteins"/>
    <property type="match status" value="1"/>
</dbReference>
<dbReference type="PROSITE" id="PS00301">
    <property type="entry name" value="G_TR_1"/>
    <property type="match status" value="1"/>
</dbReference>
<dbReference type="PROSITE" id="PS51722">
    <property type="entry name" value="G_TR_2"/>
    <property type="match status" value="1"/>
</dbReference>
<sequence length="639" mass="72556">MKIINIGVLAHVDAGKTTLTESLLYNSGAITELGSVDKGTTRTDNTLLERQRGITIQTGITSFQWENTKVNIIDTPGHMDFLAEVYRSLSVLDGAILLISAKDGVQAQTRILFHALRKMGIPTIFFINKIDQNGIDLSTVYQDIKEKLSAEIVIKQKVELYPNMCVTNFTESEQWDTVIEGNDDLLEKYMSGKSLEALELEQEESIRFHNCSLFPVYHGSAKNNIGIDNLIEVITNKFYSSTHRGQSELCGKVFKIEYSEKRQRLAYIRLYSGVLHLRDSVRISEKEKIKITEMYTSINGELCKIDKAYSGEIVILQNEFLKLNSVLGDTKLLPQRERIENPLPLLQTTVEPSKPQQREMLLDALLEISDSDPLLRYYVDSATHEIILSFLGKVQMEVTCALLQEKYHVEIEIKEPTVIYMERPLKKAEYTIHIEVPPNPFWASIGLSVSPLPLGSGMQYESSVSLGYLNQSFQNAVMEGIRYGCEQGLYGWNVTDCKICFKYGLYYSPVSTPADFRMLAPIVLEQVLKKAGTELLEPYLSFKIYAPQEYLSRAYTDAPKYCANIVDTQLKNNEVILSGEIPARCIQEYRSDLTFFTNGRSVCLTELKGYHVTTGEPVCQPRRPNSRIDKVRYMFNKIT</sequence>